<feature type="chain" id="PRO_1000049109" description="Homoserine kinase">
    <location>
        <begin position="1"/>
        <end position="306"/>
    </location>
</feature>
<feature type="binding site" evidence="1">
    <location>
        <begin position="91"/>
        <end position="101"/>
    </location>
    <ligand>
        <name>ATP</name>
        <dbReference type="ChEBI" id="CHEBI:30616"/>
    </ligand>
</feature>
<gene>
    <name evidence="1" type="primary">thrB</name>
    <name type="ordered locus">BLi03412</name>
    <name type="ordered locus">BL02135</name>
</gene>
<comment type="function">
    <text evidence="1">Catalyzes the ATP-dependent phosphorylation of L-homoserine to L-homoserine phosphate.</text>
</comment>
<comment type="catalytic activity">
    <reaction evidence="1">
        <text>L-homoserine + ATP = O-phospho-L-homoserine + ADP + H(+)</text>
        <dbReference type="Rhea" id="RHEA:13985"/>
        <dbReference type="ChEBI" id="CHEBI:15378"/>
        <dbReference type="ChEBI" id="CHEBI:30616"/>
        <dbReference type="ChEBI" id="CHEBI:57476"/>
        <dbReference type="ChEBI" id="CHEBI:57590"/>
        <dbReference type="ChEBI" id="CHEBI:456216"/>
        <dbReference type="EC" id="2.7.1.39"/>
    </reaction>
</comment>
<comment type="pathway">
    <text evidence="1">Amino-acid biosynthesis; L-threonine biosynthesis; L-threonine from L-aspartate: step 4/5.</text>
</comment>
<comment type="subcellular location">
    <subcellularLocation>
        <location evidence="1">Cytoplasm</location>
    </subcellularLocation>
</comment>
<comment type="similarity">
    <text evidence="1">Belongs to the GHMP kinase family. Homoserine kinase subfamily.</text>
</comment>
<proteinExistence type="inferred from homology"/>
<evidence type="ECO:0000255" key="1">
    <source>
        <dbReference type="HAMAP-Rule" id="MF_00384"/>
    </source>
</evidence>
<accession>Q65FC4</accession>
<accession>Q62QT9</accession>
<name>KHSE_BACLD</name>
<dbReference type="EC" id="2.7.1.39" evidence="1"/>
<dbReference type="EMBL" id="CP000002">
    <property type="protein sequence ID" value="AAU24871.1"/>
    <property type="molecule type" value="Genomic_DNA"/>
</dbReference>
<dbReference type="EMBL" id="AE017333">
    <property type="protein sequence ID" value="AAU42240.1"/>
    <property type="molecule type" value="Genomic_DNA"/>
</dbReference>
<dbReference type="RefSeq" id="WP_003184962.1">
    <property type="nucleotide sequence ID" value="NC_006322.1"/>
</dbReference>
<dbReference type="SMR" id="Q65FC4"/>
<dbReference type="STRING" id="279010.BL02135"/>
<dbReference type="GeneID" id="92860009"/>
<dbReference type="KEGG" id="bld:BLi03412"/>
<dbReference type="KEGG" id="bli:BL02135"/>
<dbReference type="eggNOG" id="COG0083">
    <property type="taxonomic scope" value="Bacteria"/>
</dbReference>
<dbReference type="HOGENOM" id="CLU_041243_0_0_9"/>
<dbReference type="UniPathway" id="UPA00050">
    <property type="reaction ID" value="UER00064"/>
</dbReference>
<dbReference type="Proteomes" id="UP000000606">
    <property type="component" value="Chromosome"/>
</dbReference>
<dbReference type="GO" id="GO:0005737">
    <property type="term" value="C:cytoplasm"/>
    <property type="evidence" value="ECO:0007669"/>
    <property type="project" value="UniProtKB-SubCell"/>
</dbReference>
<dbReference type="GO" id="GO:0005524">
    <property type="term" value="F:ATP binding"/>
    <property type="evidence" value="ECO:0007669"/>
    <property type="project" value="UniProtKB-UniRule"/>
</dbReference>
<dbReference type="GO" id="GO:0004413">
    <property type="term" value="F:homoserine kinase activity"/>
    <property type="evidence" value="ECO:0007669"/>
    <property type="project" value="UniProtKB-UniRule"/>
</dbReference>
<dbReference type="GO" id="GO:0009088">
    <property type="term" value="P:threonine biosynthetic process"/>
    <property type="evidence" value="ECO:0007669"/>
    <property type="project" value="UniProtKB-UniRule"/>
</dbReference>
<dbReference type="Gene3D" id="3.30.230.10">
    <property type="match status" value="1"/>
</dbReference>
<dbReference type="Gene3D" id="3.30.70.890">
    <property type="entry name" value="GHMP kinase, C-terminal domain"/>
    <property type="match status" value="1"/>
</dbReference>
<dbReference type="HAMAP" id="MF_00384">
    <property type="entry name" value="Homoser_kinase"/>
    <property type="match status" value="1"/>
</dbReference>
<dbReference type="InterPro" id="IPR013750">
    <property type="entry name" value="GHMP_kinase_C_dom"/>
</dbReference>
<dbReference type="InterPro" id="IPR036554">
    <property type="entry name" value="GHMP_kinase_C_sf"/>
</dbReference>
<dbReference type="InterPro" id="IPR006204">
    <property type="entry name" value="GHMP_kinase_N_dom"/>
</dbReference>
<dbReference type="InterPro" id="IPR006203">
    <property type="entry name" value="GHMP_knse_ATP-bd_CS"/>
</dbReference>
<dbReference type="InterPro" id="IPR000870">
    <property type="entry name" value="Homoserine_kinase"/>
</dbReference>
<dbReference type="InterPro" id="IPR020568">
    <property type="entry name" value="Ribosomal_Su5_D2-typ_SF"/>
</dbReference>
<dbReference type="InterPro" id="IPR014721">
    <property type="entry name" value="Ribsml_uS5_D2-typ_fold_subgr"/>
</dbReference>
<dbReference type="NCBIfam" id="TIGR00191">
    <property type="entry name" value="thrB"/>
    <property type="match status" value="1"/>
</dbReference>
<dbReference type="PANTHER" id="PTHR20861:SF1">
    <property type="entry name" value="HOMOSERINE KINASE"/>
    <property type="match status" value="1"/>
</dbReference>
<dbReference type="PANTHER" id="PTHR20861">
    <property type="entry name" value="HOMOSERINE/4-DIPHOSPHOCYTIDYL-2-C-METHYL-D-ERYTHRITOL KINASE"/>
    <property type="match status" value="1"/>
</dbReference>
<dbReference type="Pfam" id="PF08544">
    <property type="entry name" value="GHMP_kinases_C"/>
    <property type="match status" value="1"/>
</dbReference>
<dbReference type="Pfam" id="PF00288">
    <property type="entry name" value="GHMP_kinases_N"/>
    <property type="match status" value="1"/>
</dbReference>
<dbReference type="PIRSF" id="PIRSF000676">
    <property type="entry name" value="Homoser_kin"/>
    <property type="match status" value="1"/>
</dbReference>
<dbReference type="PRINTS" id="PR00958">
    <property type="entry name" value="HOMSERKINASE"/>
</dbReference>
<dbReference type="SUPFAM" id="SSF55060">
    <property type="entry name" value="GHMP Kinase, C-terminal domain"/>
    <property type="match status" value="1"/>
</dbReference>
<dbReference type="SUPFAM" id="SSF54211">
    <property type="entry name" value="Ribosomal protein S5 domain 2-like"/>
    <property type="match status" value="1"/>
</dbReference>
<dbReference type="PROSITE" id="PS00627">
    <property type="entry name" value="GHMP_KINASES_ATP"/>
    <property type="match status" value="1"/>
</dbReference>
<keyword id="KW-0028">Amino-acid biosynthesis</keyword>
<keyword id="KW-0067">ATP-binding</keyword>
<keyword id="KW-0963">Cytoplasm</keyword>
<keyword id="KW-0418">Kinase</keyword>
<keyword id="KW-0547">Nucleotide-binding</keyword>
<keyword id="KW-1185">Reference proteome</keyword>
<keyword id="KW-0791">Threonine biosynthesis</keyword>
<keyword id="KW-0808">Transferase</keyword>
<reference key="1">
    <citation type="journal article" date="2004" name="J. Mol. Microbiol. Biotechnol.">
        <title>The complete genome sequence of Bacillus licheniformis DSM13, an organism with great industrial potential.</title>
        <authorList>
            <person name="Veith B."/>
            <person name="Herzberg C."/>
            <person name="Steckel S."/>
            <person name="Feesche J."/>
            <person name="Maurer K.H."/>
            <person name="Ehrenreich P."/>
            <person name="Baeumer S."/>
            <person name="Henne A."/>
            <person name="Liesegang H."/>
            <person name="Merkl R."/>
            <person name="Ehrenreich A."/>
            <person name="Gottschalk G."/>
        </authorList>
    </citation>
    <scope>NUCLEOTIDE SEQUENCE [LARGE SCALE GENOMIC DNA]</scope>
    <source>
        <strain>ATCC 14580 / DSM 13 / JCM 2505 / CCUG 7422 / NBRC 12200 / NCIMB 9375 / NCTC 10341 / NRRL NRS-1264 / Gibson 46</strain>
    </source>
</reference>
<reference key="2">
    <citation type="journal article" date="2004" name="Genome Biol.">
        <title>Complete genome sequence of the industrial bacterium Bacillus licheniformis and comparisons with closely related Bacillus species.</title>
        <authorList>
            <person name="Rey M.W."/>
            <person name="Ramaiya P."/>
            <person name="Nelson B.A."/>
            <person name="Brody-Karpin S.D."/>
            <person name="Zaretsky E.J."/>
            <person name="Tang M."/>
            <person name="Lopez de Leon A."/>
            <person name="Xiang H."/>
            <person name="Gusti V."/>
            <person name="Clausen I.G."/>
            <person name="Olsen P.B."/>
            <person name="Rasmussen M.D."/>
            <person name="Andersen J.T."/>
            <person name="Joergensen P.L."/>
            <person name="Larsen T.S."/>
            <person name="Sorokin A."/>
            <person name="Bolotin A."/>
            <person name="Lapidus A."/>
            <person name="Galleron N."/>
            <person name="Ehrlich S.D."/>
            <person name="Berka R.M."/>
        </authorList>
    </citation>
    <scope>NUCLEOTIDE SEQUENCE [LARGE SCALE GENOMIC DNA]</scope>
    <source>
        <strain>ATCC 14580 / DSM 13 / JCM 2505 / CCUG 7422 / NBRC 12200 / NCIMB 9375 / NCTC 10341 / NRRL NRS-1264 / Gibson 46</strain>
    </source>
</reference>
<sequence>MTEADMLFSVTVPGSTANLGPGFDSVGMALSRYLRLSVFPHDEWRFEAETEVVAGIPEGTDNLIYQVAKRTAAHFGKELPPSLVKVWSDIPLARGLGSSAAAIAAAVELANELADLKLSDREKLHFASLEEGHPDNAGASLFGGLVIGLHEEDETEMVSMKDIDLDVVVVIPFYEVLTKDARDVLPESLSYPKAVEASAVSNMLVAGLMAKDWKLVGRMMQKDLFHQPYRRALVPELSKVEHEAGQNGAFGTALSGAGPTILSFIEKGKGEALRNQLASKFPHCEVDCLYVPDTGIIVERKSVNSV</sequence>
<protein>
    <recommendedName>
        <fullName evidence="1">Homoserine kinase</fullName>
        <shortName evidence="1">HK</shortName>
        <shortName evidence="1">HSK</shortName>
        <ecNumber evidence="1">2.7.1.39</ecNumber>
    </recommendedName>
</protein>
<organism>
    <name type="scientific">Bacillus licheniformis (strain ATCC 14580 / DSM 13 / JCM 2505 / CCUG 7422 / NBRC 12200 / NCIMB 9375 / NCTC 10341 / NRRL NRS-1264 / Gibson 46)</name>
    <dbReference type="NCBI Taxonomy" id="279010"/>
    <lineage>
        <taxon>Bacteria</taxon>
        <taxon>Bacillati</taxon>
        <taxon>Bacillota</taxon>
        <taxon>Bacilli</taxon>
        <taxon>Bacillales</taxon>
        <taxon>Bacillaceae</taxon>
        <taxon>Bacillus</taxon>
    </lineage>
</organism>